<gene>
    <name type="primary">OR5AC1</name>
    <name type="synonym">OR5AC1P</name>
</gene>
<proteinExistence type="inferred from homology"/>
<sequence>MAEENKILVTHFVLTGLTDHPGLQAPLFLVFLVIYLITLVGNLGLMALIWKDPHLHTPIYLFLGSLAFADACTSSSVTSKMLINFLSKNHMLSMAKCATQFYFFGSNATTECFLLVVMAYDRYVAICNPLLYPVVMSNSLCTQFIGISYFIGFLHSAIHVGLLFRLTFCRSNIIHYFYCEILQLFKISCTNPTVNILLIFIFSAFIQVFTFMTLIVSYSYILSAILKKKSEKGRSKAFSTCSAHLLSVSLFYGTLFFMYVSSRSGSAADQAKMYSLFYTIIIPLLNPFIYSLRNKEVIDALRRIMKK</sequence>
<dbReference type="EMBL" id="AB065456">
    <property type="status" value="NOT_ANNOTATED_CDS"/>
    <property type="molecule type" value="Genomic_DNA"/>
</dbReference>
<dbReference type="EMBL" id="BK004740">
    <property type="status" value="NOT_ANNOTATED_CDS"/>
    <property type="molecule type" value="Genomic_DNA"/>
</dbReference>
<dbReference type="SMR" id="P0C628"/>
<dbReference type="BioMuta" id="OR5AC1"/>
<dbReference type="DMDM" id="166215762"/>
<dbReference type="jPOST" id="P0C628"/>
<dbReference type="MassIVE" id="P0C628"/>
<dbReference type="AGR" id="HGNC:15047"/>
<dbReference type="GeneCards" id="OR5AC1"/>
<dbReference type="HGNC" id="HGNC:15047">
    <property type="gene designation" value="OR5AC1"/>
</dbReference>
<dbReference type="neXtProt" id="NX_P0C628"/>
<dbReference type="InParanoid" id="P0C628"/>
<dbReference type="OrthoDB" id="9615015at2759"/>
<dbReference type="PAN-GO" id="P0C628">
    <property type="GO annotations" value="2 GO annotations based on evolutionary models"/>
</dbReference>
<dbReference type="PhylomeDB" id="P0C628"/>
<dbReference type="PathwayCommons" id="P0C628"/>
<dbReference type="Reactome" id="R-HSA-9752946">
    <property type="pathway name" value="Expression and translocation of olfactory receptors"/>
</dbReference>
<dbReference type="Pharos" id="P0C628">
    <property type="development level" value="Tdark"/>
</dbReference>
<dbReference type="PRO" id="PR:P0C628"/>
<dbReference type="Proteomes" id="UP000005640">
    <property type="component" value="Unplaced"/>
</dbReference>
<dbReference type="RNAct" id="P0C628">
    <property type="molecule type" value="protein"/>
</dbReference>
<dbReference type="GO" id="GO:0005886">
    <property type="term" value="C:plasma membrane"/>
    <property type="evidence" value="ECO:0007669"/>
    <property type="project" value="UniProtKB-SubCell"/>
</dbReference>
<dbReference type="GO" id="GO:0004930">
    <property type="term" value="F:G protein-coupled receptor activity"/>
    <property type="evidence" value="ECO:0007669"/>
    <property type="project" value="UniProtKB-KW"/>
</dbReference>
<dbReference type="GO" id="GO:0005549">
    <property type="term" value="F:odorant binding"/>
    <property type="evidence" value="ECO:0000318"/>
    <property type="project" value="GO_Central"/>
</dbReference>
<dbReference type="GO" id="GO:0004984">
    <property type="term" value="F:olfactory receptor activity"/>
    <property type="evidence" value="ECO:0000318"/>
    <property type="project" value="GO_Central"/>
</dbReference>
<dbReference type="CDD" id="cd15409">
    <property type="entry name" value="7tmA_OR5H-like"/>
    <property type="match status" value="1"/>
</dbReference>
<dbReference type="FunFam" id="1.20.1070.10:FF:000004">
    <property type="entry name" value="Olfactory receptor"/>
    <property type="match status" value="1"/>
</dbReference>
<dbReference type="Gene3D" id="1.20.1070.10">
    <property type="entry name" value="Rhodopsin 7-helix transmembrane proteins"/>
    <property type="match status" value="1"/>
</dbReference>
<dbReference type="InterPro" id="IPR000276">
    <property type="entry name" value="GPCR_Rhodpsn"/>
</dbReference>
<dbReference type="InterPro" id="IPR017452">
    <property type="entry name" value="GPCR_Rhodpsn_7TM"/>
</dbReference>
<dbReference type="InterPro" id="IPR000725">
    <property type="entry name" value="Olfact_rcpt"/>
</dbReference>
<dbReference type="PANTHER" id="PTHR48018">
    <property type="entry name" value="OLFACTORY RECEPTOR"/>
    <property type="match status" value="1"/>
</dbReference>
<dbReference type="Pfam" id="PF13853">
    <property type="entry name" value="7tm_4"/>
    <property type="match status" value="1"/>
</dbReference>
<dbReference type="PRINTS" id="PR00237">
    <property type="entry name" value="GPCRRHODOPSN"/>
</dbReference>
<dbReference type="PRINTS" id="PR00245">
    <property type="entry name" value="OLFACTORYR"/>
</dbReference>
<dbReference type="SUPFAM" id="SSF81321">
    <property type="entry name" value="Family A G protein-coupled receptor-like"/>
    <property type="match status" value="1"/>
</dbReference>
<dbReference type="PROSITE" id="PS00237">
    <property type="entry name" value="G_PROTEIN_RECEP_F1_1"/>
    <property type="match status" value="1"/>
</dbReference>
<dbReference type="PROSITE" id="PS50262">
    <property type="entry name" value="G_PROTEIN_RECEP_F1_2"/>
    <property type="match status" value="1"/>
</dbReference>
<evidence type="ECO:0000255" key="1"/>
<evidence type="ECO:0000255" key="2">
    <source>
        <dbReference type="PROSITE-ProRule" id="PRU00521"/>
    </source>
</evidence>
<evidence type="ECO:0000305" key="3"/>
<accession>P0C628</accession>
<keyword id="KW-1003">Cell membrane</keyword>
<keyword id="KW-1015">Disulfide bond</keyword>
<keyword id="KW-0297">G-protein coupled receptor</keyword>
<keyword id="KW-0472">Membrane</keyword>
<keyword id="KW-0552">Olfaction</keyword>
<keyword id="KW-0675">Receptor</keyword>
<keyword id="KW-1185">Reference proteome</keyword>
<keyword id="KW-0716">Sensory transduction</keyword>
<keyword id="KW-0807">Transducer</keyword>
<keyword id="KW-0812">Transmembrane</keyword>
<keyword id="KW-1133">Transmembrane helix</keyword>
<protein>
    <recommendedName>
        <fullName>Olfactory receptor 5AC1</fullName>
    </recommendedName>
    <alternativeName>
        <fullName>Olfactory receptor OR3-2</fullName>
    </alternativeName>
</protein>
<name>O5AC1_HUMAN</name>
<organism>
    <name type="scientific">Homo sapiens</name>
    <name type="common">Human</name>
    <dbReference type="NCBI Taxonomy" id="9606"/>
    <lineage>
        <taxon>Eukaryota</taxon>
        <taxon>Metazoa</taxon>
        <taxon>Chordata</taxon>
        <taxon>Craniata</taxon>
        <taxon>Vertebrata</taxon>
        <taxon>Euteleostomi</taxon>
        <taxon>Mammalia</taxon>
        <taxon>Eutheria</taxon>
        <taxon>Euarchontoglires</taxon>
        <taxon>Primates</taxon>
        <taxon>Haplorrhini</taxon>
        <taxon>Catarrhini</taxon>
        <taxon>Hominidae</taxon>
        <taxon>Homo</taxon>
    </lineage>
</organism>
<comment type="function">
    <text evidence="3">Odorant receptor.</text>
</comment>
<comment type="subcellular location">
    <subcellularLocation>
        <location>Cell membrane</location>
        <topology>Multi-pass membrane protein</topology>
    </subcellularLocation>
</comment>
<comment type="polymorphism">
    <text>A single nucleotide deletion at position Phe-85 in the gene coding for this protein is responsible for functional diversity thus producing a pseudogene.</text>
</comment>
<comment type="similarity">
    <text evidence="2">Belongs to the G-protein coupled receptor 1 family.</text>
</comment>
<comment type="online information" name="Human Olfactory Receptor Data Exploratorium (HORDE)">
    <link uri="http://genome.weizmann.ac.il/horde/card/index/symbol:OR5AC1P"/>
</comment>
<reference key="1">
    <citation type="submission" date="2001-07" db="EMBL/GenBank/DDBJ databases">
        <title>Genome-wide discovery and analysis of human seven transmembrane helix receptor genes.</title>
        <authorList>
            <person name="Suwa M."/>
            <person name="Sato T."/>
            <person name="Okouchi I."/>
            <person name="Arita M."/>
            <person name="Futami K."/>
            <person name="Matsumoto S."/>
            <person name="Tsutsumi S."/>
            <person name="Aburatani H."/>
            <person name="Asai K."/>
            <person name="Akiyama Y."/>
        </authorList>
    </citation>
    <scope>NUCLEOTIDE SEQUENCE [GENOMIC DNA]</scope>
</reference>
<reference key="2">
    <citation type="journal article" date="2004" name="Proc. Natl. Acad. Sci. U.S.A.">
        <title>The human olfactory receptor gene family.</title>
        <authorList>
            <person name="Malnic B."/>
            <person name="Godfrey P.A."/>
            <person name="Buck L.B."/>
        </authorList>
    </citation>
    <scope>IDENTIFICATION</scope>
</reference>
<reference key="3">
    <citation type="journal article" date="2004" name="Proc. Natl. Acad. Sci. U.S.A.">
        <authorList>
            <person name="Malnic B."/>
            <person name="Godfrey P.A."/>
            <person name="Buck L.B."/>
        </authorList>
    </citation>
    <scope>ERRATUM OF PUBMED:14983052</scope>
</reference>
<reference key="4">
    <citation type="journal article" date="2007" name="PLoS Biol.">
        <title>Genetic elucidation of human hyperosmia to isovaleric acid.</title>
        <authorList>
            <person name="Menashe I."/>
            <person name="Abaffy T."/>
            <person name="Hasin Y."/>
            <person name="Goshen S."/>
            <person name="Yahalom V."/>
            <person name="Luetje C.W."/>
            <person name="Lancet D."/>
        </authorList>
    </citation>
    <scope>POLYMORPHISM</scope>
</reference>
<feature type="chain" id="PRO_0000315273" description="Olfactory receptor 5AC1">
    <location>
        <begin position="1"/>
        <end position="307"/>
    </location>
</feature>
<feature type="topological domain" description="Extracellular" evidence="1">
    <location>
        <begin position="1"/>
        <end position="28"/>
    </location>
</feature>
<feature type="transmembrane region" description="Helical; Name=1" evidence="1">
    <location>
        <begin position="29"/>
        <end position="49"/>
    </location>
</feature>
<feature type="topological domain" description="Cytoplasmic" evidence="1">
    <location>
        <begin position="50"/>
        <end position="56"/>
    </location>
</feature>
<feature type="transmembrane region" description="Helical; Name=2" evidence="1">
    <location>
        <begin position="57"/>
        <end position="77"/>
    </location>
</feature>
<feature type="topological domain" description="Extracellular" evidence="1">
    <location>
        <begin position="78"/>
        <end position="99"/>
    </location>
</feature>
<feature type="transmembrane region" description="Helical; Name=3" evidence="1">
    <location>
        <begin position="100"/>
        <end position="120"/>
    </location>
</feature>
<feature type="topological domain" description="Cytoplasmic" evidence="1">
    <location>
        <begin position="121"/>
        <end position="143"/>
    </location>
</feature>
<feature type="transmembrane region" description="Helical; Name=4" evidence="1">
    <location>
        <begin position="144"/>
        <end position="164"/>
    </location>
</feature>
<feature type="topological domain" description="Extracellular" evidence="1">
    <location>
        <begin position="165"/>
        <end position="195"/>
    </location>
</feature>
<feature type="transmembrane region" description="Helical; Name=5" evidence="1">
    <location>
        <begin position="196"/>
        <end position="216"/>
    </location>
</feature>
<feature type="topological domain" description="Cytoplasmic" evidence="1">
    <location>
        <begin position="217"/>
        <end position="239"/>
    </location>
</feature>
<feature type="transmembrane region" description="Helical; Name=6" evidence="1">
    <location>
        <begin position="240"/>
        <end position="260"/>
    </location>
</feature>
<feature type="topological domain" description="Extracellular" evidence="1">
    <location>
        <begin position="261"/>
        <end position="271"/>
    </location>
</feature>
<feature type="transmembrane region" description="Helical; Name=7" evidence="1">
    <location>
        <begin position="272"/>
        <end position="292"/>
    </location>
</feature>
<feature type="topological domain" description="Cytoplasmic" evidence="1">
    <location>
        <begin position="293"/>
        <end position="307"/>
    </location>
</feature>
<feature type="disulfide bond" evidence="2">
    <location>
        <begin position="97"/>
        <end position="179"/>
    </location>
</feature>